<keyword id="KW-0489">Methyltransferase</keyword>
<keyword id="KW-0694">RNA-binding</keyword>
<keyword id="KW-0698">rRNA processing</keyword>
<keyword id="KW-0808">Transferase</keyword>
<keyword id="KW-0819">tRNA processing</keyword>
<reference key="1">
    <citation type="journal article" date="2009" name="Proc. Natl. Acad. Sci. U.S.A.">
        <title>Biogeography of the Sulfolobus islandicus pan-genome.</title>
        <authorList>
            <person name="Reno M.L."/>
            <person name="Held N.L."/>
            <person name="Fields C.J."/>
            <person name="Burke P.V."/>
            <person name="Whitaker R.J."/>
        </authorList>
    </citation>
    <scope>NUCLEOTIDE SEQUENCE [LARGE SCALE GENOMIC DNA]</scope>
    <source>
        <strain>L.S.2.15 / Lassen #1</strain>
    </source>
</reference>
<organism>
    <name type="scientific">Saccharolobus islandicus (strain L.S.2.15 / Lassen #1)</name>
    <name type="common">Sulfolobus islandicus</name>
    <dbReference type="NCBI Taxonomy" id="429572"/>
    <lineage>
        <taxon>Archaea</taxon>
        <taxon>Thermoproteota</taxon>
        <taxon>Thermoprotei</taxon>
        <taxon>Sulfolobales</taxon>
        <taxon>Sulfolobaceae</taxon>
        <taxon>Saccharolobus</taxon>
    </lineage>
</organism>
<sequence>MSEVVTVKQTNMENIYECEFNDGSFRLCTRNLVSGFNVYGERLIKYEGVEYREWNAFRSKLAGAILKGLKTNPIRKGTKVLYLGAASGTTISHVSDIIELNGKAYGVEFSPRVVRELLLVAQRRPNIFPLLADARFPQSYKSVVENVDVLYVDIAQPDQTDIAIYNARFFLKVNGYMLLVIKARSIDVTKDPKEIYKAEVEKLENSNFETIQIINLDPYDKDHAIVLSRYKG</sequence>
<proteinExistence type="inferred from homology"/>
<accession>C3MPR8</accession>
<gene>
    <name evidence="1" type="primary">flpA</name>
    <name type="ordered locus">LS215_1373</name>
</gene>
<feature type="chain" id="PRO_1000205343" description="Fibrillarin-like rRNA/tRNA 2'-O-methyltransferase">
    <location>
        <begin position="1"/>
        <end position="232"/>
    </location>
</feature>
<feature type="binding site" evidence="1">
    <location>
        <begin position="89"/>
        <end position="90"/>
    </location>
    <ligand>
        <name>S-adenosyl-L-methionine</name>
        <dbReference type="ChEBI" id="CHEBI:59789"/>
    </ligand>
</feature>
<feature type="binding site" evidence="1">
    <location>
        <begin position="108"/>
        <end position="109"/>
    </location>
    <ligand>
        <name>S-adenosyl-L-methionine</name>
        <dbReference type="ChEBI" id="CHEBI:59789"/>
    </ligand>
</feature>
<feature type="binding site" evidence="1">
    <location>
        <begin position="133"/>
        <end position="134"/>
    </location>
    <ligand>
        <name>S-adenosyl-L-methionine</name>
        <dbReference type="ChEBI" id="CHEBI:59789"/>
    </ligand>
</feature>
<feature type="binding site" evidence="1">
    <location>
        <begin position="153"/>
        <end position="156"/>
    </location>
    <ligand>
        <name>S-adenosyl-L-methionine</name>
        <dbReference type="ChEBI" id="CHEBI:59789"/>
    </ligand>
</feature>
<name>FLPA_SACI2</name>
<comment type="function">
    <text evidence="1">Involved in pre-rRNA and tRNA processing. Utilizes the methyl donor S-adenosyl-L-methionine to catalyze the site-specific 2'-hydroxyl methylation of ribose moieties in rRNA and tRNA. Site specificity is provided by a guide RNA that base pairs with the substrate. Methylation occurs at a characteristic distance from the sequence involved in base pairing with the guide RNA.</text>
</comment>
<comment type="subunit">
    <text evidence="1">Interacts with nop5. Component of box C/D small ribonucleoprotein (sRNP) particles that contain rpl7ae, FlpA and nop5, plus a guide RNA.</text>
</comment>
<comment type="similarity">
    <text evidence="1">Belongs to the methyltransferase superfamily. Fibrillarin family.</text>
</comment>
<protein>
    <recommendedName>
        <fullName evidence="1">Fibrillarin-like rRNA/tRNA 2'-O-methyltransferase</fullName>
        <ecNumber evidence="1">2.1.1.-</ecNumber>
    </recommendedName>
</protein>
<evidence type="ECO:0000255" key="1">
    <source>
        <dbReference type="HAMAP-Rule" id="MF_00351"/>
    </source>
</evidence>
<dbReference type="EC" id="2.1.1.-" evidence="1"/>
<dbReference type="EMBL" id="CP001399">
    <property type="protein sequence ID" value="ACP35381.1"/>
    <property type="molecule type" value="Genomic_DNA"/>
</dbReference>
<dbReference type="RefSeq" id="WP_012711293.1">
    <property type="nucleotide sequence ID" value="NC_012589.1"/>
</dbReference>
<dbReference type="SMR" id="C3MPR8"/>
<dbReference type="KEGG" id="sis:LS215_1373"/>
<dbReference type="HOGENOM" id="CLU_059055_2_0_2"/>
<dbReference type="OrthoDB" id="6244at2157"/>
<dbReference type="Proteomes" id="UP000001747">
    <property type="component" value="Chromosome"/>
</dbReference>
<dbReference type="GO" id="GO:1990259">
    <property type="term" value="F:histone H2AQ104 methyltransferase activity"/>
    <property type="evidence" value="ECO:0007669"/>
    <property type="project" value="TreeGrafter"/>
</dbReference>
<dbReference type="GO" id="GO:0003723">
    <property type="term" value="F:RNA binding"/>
    <property type="evidence" value="ECO:0007669"/>
    <property type="project" value="UniProtKB-UniRule"/>
</dbReference>
<dbReference type="GO" id="GO:0008649">
    <property type="term" value="F:rRNA methyltransferase activity"/>
    <property type="evidence" value="ECO:0007669"/>
    <property type="project" value="TreeGrafter"/>
</dbReference>
<dbReference type="GO" id="GO:0000494">
    <property type="term" value="P:box C/D sno(s)RNA 3'-end processing"/>
    <property type="evidence" value="ECO:0007669"/>
    <property type="project" value="TreeGrafter"/>
</dbReference>
<dbReference type="GO" id="GO:0008033">
    <property type="term" value="P:tRNA processing"/>
    <property type="evidence" value="ECO:0007669"/>
    <property type="project" value="UniProtKB-UniRule"/>
</dbReference>
<dbReference type="CDD" id="cd02440">
    <property type="entry name" value="AdoMet_MTases"/>
    <property type="match status" value="1"/>
</dbReference>
<dbReference type="FunFam" id="3.30.200.20:FF:000613">
    <property type="entry name" value="Fibrillarin-like rRNA/tRNA 2'-O-methyltransferase"/>
    <property type="match status" value="1"/>
</dbReference>
<dbReference type="Gene3D" id="3.30.200.20">
    <property type="entry name" value="Phosphorylase Kinase, domain 1"/>
    <property type="match status" value="1"/>
</dbReference>
<dbReference type="Gene3D" id="3.40.50.150">
    <property type="entry name" value="Vaccinia Virus protein VP39"/>
    <property type="match status" value="1"/>
</dbReference>
<dbReference type="HAMAP" id="MF_00351">
    <property type="entry name" value="RNA_methyltransf_FlpA"/>
    <property type="match status" value="1"/>
</dbReference>
<dbReference type="InterPro" id="IPR000692">
    <property type="entry name" value="Fibrillarin"/>
</dbReference>
<dbReference type="InterPro" id="IPR020813">
    <property type="entry name" value="Fibrillarin_CS"/>
</dbReference>
<dbReference type="InterPro" id="IPR029063">
    <property type="entry name" value="SAM-dependent_MTases_sf"/>
</dbReference>
<dbReference type="NCBIfam" id="NF003275">
    <property type="entry name" value="PRK04266.1-1"/>
    <property type="match status" value="1"/>
</dbReference>
<dbReference type="NCBIfam" id="NF003276">
    <property type="entry name" value="PRK04266.1-2"/>
    <property type="match status" value="1"/>
</dbReference>
<dbReference type="NCBIfam" id="NF003277">
    <property type="entry name" value="PRK04266.1-3"/>
    <property type="match status" value="1"/>
</dbReference>
<dbReference type="PANTHER" id="PTHR10335:SF17">
    <property type="entry name" value="FIBRILLARIN"/>
    <property type="match status" value="1"/>
</dbReference>
<dbReference type="PANTHER" id="PTHR10335">
    <property type="entry name" value="RRNA 2-O-METHYLTRANSFERASE FIBRILLARIN"/>
    <property type="match status" value="1"/>
</dbReference>
<dbReference type="Pfam" id="PF01269">
    <property type="entry name" value="Fibrillarin"/>
    <property type="match status" value="1"/>
</dbReference>
<dbReference type="PIRSF" id="PIRSF006540">
    <property type="entry name" value="Nop17p"/>
    <property type="match status" value="1"/>
</dbReference>
<dbReference type="PRINTS" id="PR00052">
    <property type="entry name" value="FIBRILLARIN"/>
</dbReference>
<dbReference type="SMART" id="SM01206">
    <property type="entry name" value="Fibrillarin"/>
    <property type="match status" value="1"/>
</dbReference>
<dbReference type="SUPFAM" id="SSF53335">
    <property type="entry name" value="S-adenosyl-L-methionine-dependent methyltransferases"/>
    <property type="match status" value="1"/>
</dbReference>
<dbReference type="PROSITE" id="PS00566">
    <property type="entry name" value="FIBRILLARIN"/>
    <property type="match status" value="1"/>
</dbReference>